<reference key="1">
    <citation type="journal article" date="2004" name="Gene">
        <title>Identification and characterization of a novel gene family YPEL in a wide spectrum of eukaryotic species.</title>
        <authorList>
            <person name="Hosono K."/>
            <person name="Sasaki T."/>
            <person name="Minoshima S."/>
            <person name="Shimizu N."/>
        </authorList>
    </citation>
    <scope>NUCLEOTIDE SEQUENCE [MRNA]</scope>
</reference>
<gene>
    <name type="primary">YPEL2</name>
</gene>
<organism>
    <name type="scientific">Chlorocebus aethiops</name>
    <name type="common">Green monkey</name>
    <name type="synonym">Cercopithecus aethiops</name>
    <dbReference type="NCBI Taxonomy" id="9534"/>
    <lineage>
        <taxon>Eukaryota</taxon>
        <taxon>Metazoa</taxon>
        <taxon>Chordata</taxon>
        <taxon>Craniata</taxon>
        <taxon>Vertebrata</taxon>
        <taxon>Euteleostomi</taxon>
        <taxon>Mammalia</taxon>
        <taxon>Eutheria</taxon>
        <taxon>Euarchontoglires</taxon>
        <taxon>Primates</taxon>
        <taxon>Haplorrhini</taxon>
        <taxon>Catarrhini</taxon>
        <taxon>Cercopithecidae</taxon>
        <taxon>Cercopithecinae</taxon>
        <taxon>Chlorocebus</taxon>
    </lineage>
</organism>
<keyword id="KW-0479">Metal-binding</keyword>
<keyword id="KW-0539">Nucleus</keyword>
<keyword id="KW-0862">Zinc</keyword>
<protein>
    <recommendedName>
        <fullName>Protein yippee-like 2</fullName>
    </recommendedName>
</protein>
<feature type="chain" id="PRO_0000212384" description="Protein yippee-like 2">
    <location>
        <begin position="1"/>
        <end position="119"/>
    </location>
</feature>
<feature type="domain" description="Yippee" evidence="2">
    <location>
        <begin position="19"/>
        <end position="116"/>
    </location>
</feature>
<feature type="binding site" evidence="2">
    <location>
        <position position="23"/>
    </location>
    <ligand>
        <name>Zn(2+)</name>
        <dbReference type="ChEBI" id="CHEBI:29105"/>
    </ligand>
</feature>
<feature type="binding site" evidence="2">
    <location>
        <position position="26"/>
    </location>
    <ligand>
        <name>Zn(2+)</name>
        <dbReference type="ChEBI" id="CHEBI:29105"/>
    </ligand>
</feature>
<feature type="binding site" evidence="2">
    <location>
        <position position="79"/>
    </location>
    <ligand>
        <name>Zn(2+)</name>
        <dbReference type="ChEBI" id="CHEBI:29105"/>
    </ligand>
</feature>
<feature type="binding site" evidence="2">
    <location>
        <position position="82"/>
    </location>
    <ligand>
        <name>Zn(2+)</name>
        <dbReference type="ChEBI" id="CHEBI:29105"/>
    </ligand>
</feature>
<sequence>MVKMTRSKTFQAYLPSCHRTYSCIHCRAHLANHDELISKSFQGSQGRAYLFNSVVNVGCGPAEERVLLTGLHAVADIYCENCKTTLGWKYEHAFESSQKYKEGKYIIELAHMIKDNGWD</sequence>
<proteinExistence type="inferred from homology"/>
<name>YPEL2_CHLAE</name>
<comment type="subunit">
    <text evidence="1">May interact with FAM168B.</text>
</comment>
<comment type="subcellular location">
    <subcellularLocation>
        <location evidence="1">Nucleus</location>
        <location evidence="1">Nucleolus</location>
    </subcellularLocation>
</comment>
<comment type="similarity">
    <text evidence="3">Belongs to the yippee family.</text>
</comment>
<accession>Q65Z58</accession>
<dbReference type="EMBL" id="AB160978">
    <property type="protein sequence ID" value="BAD51387.1"/>
    <property type="molecule type" value="mRNA"/>
</dbReference>
<dbReference type="SMR" id="Q65Z58"/>
<dbReference type="GO" id="GO:0005730">
    <property type="term" value="C:nucleolus"/>
    <property type="evidence" value="ECO:0007669"/>
    <property type="project" value="UniProtKB-SubCell"/>
</dbReference>
<dbReference type="GO" id="GO:0046872">
    <property type="term" value="F:metal ion binding"/>
    <property type="evidence" value="ECO:0007669"/>
    <property type="project" value="UniProtKB-KW"/>
</dbReference>
<dbReference type="InterPro" id="IPR034751">
    <property type="entry name" value="Yippee"/>
</dbReference>
<dbReference type="InterPro" id="IPR004910">
    <property type="entry name" value="Yippee/Mis18/Cereblon"/>
</dbReference>
<dbReference type="InterPro" id="IPR039058">
    <property type="entry name" value="Yippee_fam"/>
</dbReference>
<dbReference type="PANTHER" id="PTHR13848">
    <property type="entry name" value="PROTEIN YIPPEE-LIKE CG15309-RELATED"/>
    <property type="match status" value="1"/>
</dbReference>
<dbReference type="Pfam" id="PF03226">
    <property type="entry name" value="Yippee-Mis18"/>
    <property type="match status" value="1"/>
</dbReference>
<dbReference type="PROSITE" id="PS51792">
    <property type="entry name" value="YIPPEE"/>
    <property type="match status" value="1"/>
</dbReference>
<evidence type="ECO:0000250" key="1"/>
<evidence type="ECO:0000255" key="2">
    <source>
        <dbReference type="PROSITE-ProRule" id="PRU01128"/>
    </source>
</evidence>
<evidence type="ECO:0000305" key="3"/>